<feature type="chain" id="PRO_0000299411" description="La-related protein 1B">
    <location>
        <begin position="1"/>
        <end position="914"/>
    </location>
</feature>
<feature type="domain" description="HTH La-type RNA-binding" evidence="1">
    <location>
        <begin position="209"/>
        <end position="299"/>
    </location>
</feature>
<feature type="region of interest" description="Disordered" evidence="2">
    <location>
        <begin position="1"/>
        <end position="169"/>
    </location>
</feature>
<feature type="region of interest" description="Disordered" evidence="2">
    <location>
        <begin position="327"/>
        <end position="348"/>
    </location>
</feature>
<feature type="region of interest" description="Disordered" evidence="2">
    <location>
        <begin position="590"/>
        <end position="681"/>
    </location>
</feature>
<feature type="region of interest" description="Disordered" evidence="2">
    <location>
        <begin position="852"/>
        <end position="914"/>
    </location>
</feature>
<feature type="compositionally biased region" description="Polar residues" evidence="2">
    <location>
        <begin position="1"/>
        <end position="25"/>
    </location>
</feature>
<feature type="compositionally biased region" description="Basic and acidic residues" evidence="2">
    <location>
        <begin position="28"/>
        <end position="51"/>
    </location>
</feature>
<feature type="compositionally biased region" description="Basic residues" evidence="2">
    <location>
        <begin position="69"/>
        <end position="79"/>
    </location>
</feature>
<feature type="compositionally biased region" description="Basic and acidic residues" evidence="2">
    <location>
        <begin position="84"/>
        <end position="95"/>
    </location>
</feature>
<feature type="compositionally biased region" description="Basic and acidic residues" evidence="2">
    <location>
        <begin position="114"/>
        <end position="130"/>
    </location>
</feature>
<feature type="compositionally biased region" description="Low complexity" evidence="2">
    <location>
        <begin position="134"/>
        <end position="147"/>
    </location>
</feature>
<feature type="compositionally biased region" description="Basic residues" evidence="2">
    <location>
        <begin position="148"/>
        <end position="164"/>
    </location>
</feature>
<feature type="compositionally biased region" description="Low complexity" evidence="2">
    <location>
        <begin position="599"/>
        <end position="608"/>
    </location>
</feature>
<feature type="compositionally biased region" description="Basic and acidic residues" evidence="2">
    <location>
        <begin position="624"/>
        <end position="633"/>
    </location>
</feature>
<feature type="compositionally biased region" description="Low complexity" evidence="2">
    <location>
        <begin position="665"/>
        <end position="675"/>
    </location>
</feature>
<feature type="compositionally biased region" description="Polar residues" evidence="2">
    <location>
        <begin position="876"/>
        <end position="914"/>
    </location>
</feature>
<feature type="modified residue" description="Phosphoserine" evidence="10 11 12 13">
    <location>
        <position position="60"/>
    </location>
</feature>
<feature type="modified residue" description="Phosphoserine" evidence="14">
    <location>
        <position position="327"/>
    </location>
</feature>
<feature type="modified residue" description="Phosphothreonine" evidence="14">
    <location>
        <position position="329"/>
    </location>
</feature>
<feature type="modified residue" description="Phosphoserine" evidence="14">
    <location>
        <position position="335"/>
    </location>
</feature>
<feature type="modified residue" description="Phosphoserine" evidence="13 14">
    <location>
        <position position="340"/>
    </location>
</feature>
<feature type="modified residue" description="Phosphoserine" evidence="13 14">
    <location>
        <position position="343"/>
    </location>
</feature>
<feature type="modified residue" description="Phosphothreonine" evidence="14">
    <location>
        <position position="427"/>
    </location>
</feature>
<feature type="modified residue" description="Phosphoserine" evidence="11">
    <location>
        <position position="432"/>
    </location>
</feature>
<feature type="modified residue" description="Phosphoserine" evidence="14">
    <location>
        <position position="436"/>
    </location>
</feature>
<feature type="modified residue" description="Phosphothreonine" evidence="13 14">
    <location>
        <position position="454"/>
    </location>
</feature>
<feature type="splice variant" id="VSP_027638" description="In isoform 8." evidence="6">
    <location>
        <begin position="1"/>
        <end position="790"/>
    </location>
</feature>
<feature type="splice variant" id="VSP_027639" description="In isoform 6 and isoform 7." evidence="7">
    <location>
        <begin position="1"/>
        <end position="654"/>
    </location>
</feature>
<feature type="splice variant" id="VSP_027640" description="In isoform 5." evidence="8">
    <location>
        <begin position="1"/>
        <end position="581"/>
    </location>
</feature>
<feature type="splice variant" id="VSP_027641" description="In isoform 4." evidence="6">
    <location>
        <begin position="1"/>
        <end position="194"/>
    </location>
</feature>
<feature type="splice variant" id="VSP_027642" description="In isoform 2." evidence="6">
    <original>ANKHKWVPLHLDVVRSESQERPGSRNSSRCQPEANKPTHNNRRNDTRS</original>
    <variation>G</variation>
    <location>
        <begin position="73"/>
        <end position="120"/>
    </location>
</feature>
<feature type="splice variant" id="VSP_027643" description="In isoform 3." evidence="7">
    <original>ESAPNS</original>
    <variation>VRVMIF</variation>
    <location>
        <begin position="330"/>
        <end position="335"/>
    </location>
</feature>
<feature type="splice variant" id="VSP_027644" description="In isoform 3." evidence="7">
    <location>
        <begin position="336"/>
        <end position="914"/>
    </location>
</feature>
<feature type="splice variant" id="VSP_027645" description="In isoform 4." evidence="6">
    <original>QEVENFKKLNLISK</original>
    <variation>VIVSGQHLSTDALF</variation>
    <location>
        <begin position="509"/>
        <end position="522"/>
    </location>
</feature>
<feature type="splice variant" id="VSP_027646" description="In isoform 4." evidence="6">
    <location>
        <begin position="523"/>
        <end position="914"/>
    </location>
</feature>
<feature type="splice variant" id="VSP_027647" description="In isoform 2." evidence="6">
    <location>
        <begin position="550"/>
        <end position="561"/>
    </location>
</feature>
<feature type="splice variant" id="VSP_027648" description="In isoform 9." evidence="7">
    <original>YGLECLFRFYSYGLEKK</original>
    <variation>SAVWTRKVLGLFEIFSI</variation>
    <location>
        <begin position="771"/>
        <end position="787"/>
    </location>
</feature>
<feature type="splice variant" id="VSP_027649" description="In isoform 9." evidence="7">
    <location>
        <begin position="788"/>
        <end position="914"/>
    </location>
</feature>
<feature type="splice variant" id="VSP_027650" description="In isoform 8." evidence="6">
    <original>EIFQDFQEETKKDYES</original>
    <variation>MRNLDNLLGKMQKKIT</variation>
    <location>
        <begin position="791"/>
        <end position="806"/>
    </location>
</feature>
<feature type="splice variant" id="VSP_027651" description="In isoform 5." evidence="8">
    <original>PPISDEFGRKRHSSTSGEESNRHRLPPNSSTKPPNAAKPTSTSELQVPINSPRRNISPESSDNSH</original>
    <variation>NHHDRLLLLIINI</variation>
    <location>
        <begin position="850"/>
        <end position="914"/>
    </location>
</feature>
<feature type="splice variant" id="VSP_027652" description="In isoform 7." evidence="7">
    <original>PPISDEFGRKRHSSTSGEESNRHRLPPNSSTKPPNAAKPTSTSELQVPINSPRRNISPESSDNSH</original>
    <variation>EADPIE</variation>
    <location>
        <begin position="850"/>
        <end position="914"/>
    </location>
</feature>
<feature type="splice variant" id="VSP_027653" description="In isoform 6." evidence="7">
    <original>VPINSPRRNISPESSDNSH</original>
    <variation>EADPIE</variation>
    <location>
        <begin position="896"/>
        <end position="914"/>
    </location>
</feature>
<feature type="sequence variant" id="VAR_034813" description="In dbSNP:rs12508837." evidence="3 5">
    <original>P</original>
    <variation>R</variation>
    <location>
        <position position="462"/>
    </location>
</feature>
<feature type="sequence variant" id="VAR_034814" description="In dbSNP:rs12645577." evidence="4 5">
    <original>R</original>
    <variation>H</variation>
    <location>
        <position position="660"/>
    </location>
</feature>
<feature type="sequence conflict" description="In Ref. 1; BAC03970." evidence="9" ref="1">
    <original>A</original>
    <variation>V</variation>
    <location>
        <position position="272"/>
    </location>
</feature>
<feature type="sequence conflict" description="In Ref. 1; BAA91576." evidence="9" ref="1">
    <original>K</original>
    <variation>E</variation>
    <location>
        <position position="289"/>
    </location>
</feature>
<feature type="sequence conflict" description="In Ref. 1; BAC05306." evidence="9" ref="1">
    <original>E</original>
    <variation>T</variation>
    <location>
        <position position="291"/>
    </location>
</feature>
<feature type="sequence conflict" description="In Ref. 1; BAC03970." evidence="9" ref="1">
    <original>R</original>
    <variation>Q</variation>
    <location>
        <position position="473"/>
    </location>
</feature>
<feature type="sequence conflict" description="In Ref. 2; CAD97908." evidence="9" ref="2">
    <original>T</original>
    <variation>A</variation>
    <location>
        <position position="639"/>
    </location>
</feature>
<feature type="sequence conflict" description="In Ref. 4; AAH62606." evidence="9" ref="4">
    <original>N</original>
    <variation>S</variation>
    <location>
        <position position="671"/>
    </location>
</feature>
<accession>Q659C4</accession>
<accession>Q2YDB6</accession>
<accession>Q4W599</accession>
<accession>Q4W5B2</accession>
<accession>Q659A0</accession>
<accession>Q6P5X2</accession>
<accession>Q7Z3F7</accession>
<accession>Q86VK7</accession>
<accession>Q8N6F4</accession>
<accession>Q8N7H4</accession>
<accession>Q8NAF2</accession>
<accession>Q9H5E7</accession>
<accession>Q9NW12</accession>
<reference key="1">
    <citation type="journal article" date="2004" name="Nat. Genet.">
        <title>Complete sequencing and characterization of 21,243 full-length human cDNAs.</title>
        <authorList>
            <person name="Ota T."/>
            <person name="Suzuki Y."/>
            <person name="Nishikawa T."/>
            <person name="Otsuki T."/>
            <person name="Sugiyama T."/>
            <person name="Irie R."/>
            <person name="Wakamatsu A."/>
            <person name="Hayashi K."/>
            <person name="Sato H."/>
            <person name="Nagai K."/>
            <person name="Kimura K."/>
            <person name="Makita H."/>
            <person name="Sekine M."/>
            <person name="Obayashi M."/>
            <person name="Nishi T."/>
            <person name="Shibahara T."/>
            <person name="Tanaka T."/>
            <person name="Ishii S."/>
            <person name="Yamamoto J."/>
            <person name="Saito K."/>
            <person name="Kawai Y."/>
            <person name="Isono Y."/>
            <person name="Nakamura Y."/>
            <person name="Nagahari K."/>
            <person name="Murakami K."/>
            <person name="Yasuda T."/>
            <person name="Iwayanagi T."/>
            <person name="Wagatsuma M."/>
            <person name="Shiratori A."/>
            <person name="Sudo H."/>
            <person name="Hosoiri T."/>
            <person name="Kaku Y."/>
            <person name="Kodaira H."/>
            <person name="Kondo H."/>
            <person name="Sugawara M."/>
            <person name="Takahashi M."/>
            <person name="Kanda K."/>
            <person name="Yokoi T."/>
            <person name="Furuya T."/>
            <person name="Kikkawa E."/>
            <person name="Omura Y."/>
            <person name="Abe K."/>
            <person name="Kamihara K."/>
            <person name="Katsuta N."/>
            <person name="Sato K."/>
            <person name="Tanikawa M."/>
            <person name="Yamazaki M."/>
            <person name="Ninomiya K."/>
            <person name="Ishibashi T."/>
            <person name="Yamashita H."/>
            <person name="Murakawa K."/>
            <person name="Fujimori K."/>
            <person name="Tanai H."/>
            <person name="Kimata M."/>
            <person name="Watanabe M."/>
            <person name="Hiraoka S."/>
            <person name="Chiba Y."/>
            <person name="Ishida S."/>
            <person name="Ono Y."/>
            <person name="Takiguchi S."/>
            <person name="Watanabe S."/>
            <person name="Yosida M."/>
            <person name="Hotuta T."/>
            <person name="Kusano J."/>
            <person name="Kanehori K."/>
            <person name="Takahashi-Fujii A."/>
            <person name="Hara H."/>
            <person name="Tanase T.-O."/>
            <person name="Nomura Y."/>
            <person name="Togiya S."/>
            <person name="Komai F."/>
            <person name="Hara R."/>
            <person name="Takeuchi K."/>
            <person name="Arita M."/>
            <person name="Imose N."/>
            <person name="Musashino K."/>
            <person name="Yuuki H."/>
            <person name="Oshima A."/>
            <person name="Sasaki N."/>
            <person name="Aotsuka S."/>
            <person name="Yoshikawa Y."/>
            <person name="Matsunawa H."/>
            <person name="Ichihara T."/>
            <person name="Shiohata N."/>
            <person name="Sano S."/>
            <person name="Moriya S."/>
            <person name="Momiyama H."/>
            <person name="Satoh N."/>
            <person name="Takami S."/>
            <person name="Terashima Y."/>
            <person name="Suzuki O."/>
            <person name="Nakagawa S."/>
            <person name="Senoh A."/>
            <person name="Mizoguchi H."/>
            <person name="Goto Y."/>
            <person name="Shimizu F."/>
            <person name="Wakebe H."/>
            <person name="Hishigaki H."/>
            <person name="Watanabe T."/>
            <person name="Sugiyama A."/>
            <person name="Takemoto M."/>
            <person name="Kawakami B."/>
            <person name="Yamazaki M."/>
            <person name="Watanabe K."/>
            <person name="Kumagai A."/>
            <person name="Itakura S."/>
            <person name="Fukuzumi Y."/>
            <person name="Fujimori Y."/>
            <person name="Komiyama M."/>
            <person name="Tashiro H."/>
            <person name="Tanigami A."/>
            <person name="Fujiwara T."/>
            <person name="Ono T."/>
            <person name="Yamada K."/>
            <person name="Fujii Y."/>
            <person name="Ozaki K."/>
            <person name="Hirao M."/>
            <person name="Ohmori Y."/>
            <person name="Kawabata A."/>
            <person name="Hikiji T."/>
            <person name="Kobatake N."/>
            <person name="Inagaki H."/>
            <person name="Ikema Y."/>
            <person name="Okamoto S."/>
            <person name="Okitani R."/>
            <person name="Kawakami T."/>
            <person name="Noguchi S."/>
            <person name="Itoh T."/>
            <person name="Shigeta K."/>
            <person name="Senba T."/>
            <person name="Matsumura K."/>
            <person name="Nakajima Y."/>
            <person name="Mizuno T."/>
            <person name="Morinaga M."/>
            <person name="Sasaki M."/>
            <person name="Togashi T."/>
            <person name="Oyama M."/>
            <person name="Hata H."/>
            <person name="Watanabe M."/>
            <person name="Komatsu T."/>
            <person name="Mizushima-Sugano J."/>
            <person name="Satoh T."/>
            <person name="Shirai Y."/>
            <person name="Takahashi Y."/>
            <person name="Nakagawa K."/>
            <person name="Okumura K."/>
            <person name="Nagase T."/>
            <person name="Nomura N."/>
            <person name="Kikuchi H."/>
            <person name="Masuho Y."/>
            <person name="Yamashita R."/>
            <person name="Nakai K."/>
            <person name="Yada T."/>
            <person name="Nakamura Y."/>
            <person name="Ohara O."/>
            <person name="Isogai T."/>
            <person name="Sugano S."/>
        </authorList>
    </citation>
    <scope>NUCLEOTIDE SEQUENCE [LARGE SCALE MRNA] (ISOFORMS 4 AND 8)</scope>
    <scope>NUCLEOTIDE SEQUENCE [LARGE SCALE MRNA] OF 1-634 (ISOFORM 2)</scope>
    <scope>NUCLEOTIDE SEQUENCE [LARGE SCALE MRNA] OF 608-914 (ISOFORM 1)</scope>
    <scope>VARIANT ARG-462</scope>
    <source>
        <tissue>Lung</tissue>
        <tissue>Small intestine</tissue>
        <tissue>Teratocarcinoma</tissue>
        <tissue>Thyroid</tissue>
    </source>
</reference>
<reference key="2">
    <citation type="journal article" date="2007" name="BMC Genomics">
        <title>The full-ORF clone resource of the German cDNA consortium.</title>
        <authorList>
            <person name="Bechtel S."/>
            <person name="Rosenfelder H."/>
            <person name="Duda A."/>
            <person name="Schmidt C.P."/>
            <person name="Ernst U."/>
            <person name="Wellenreuther R."/>
            <person name="Mehrle A."/>
            <person name="Schuster C."/>
            <person name="Bahr A."/>
            <person name="Bloecker H."/>
            <person name="Heubner D."/>
            <person name="Hoerlein A."/>
            <person name="Michel G."/>
            <person name="Wedler H."/>
            <person name="Koehrer K."/>
            <person name="Ottenwaelder B."/>
            <person name="Poustka A."/>
            <person name="Wiemann S."/>
            <person name="Schupp I."/>
        </authorList>
    </citation>
    <scope>NUCLEOTIDE SEQUENCE [LARGE SCALE MRNA] (ISOFORMS 1 AND 5)</scope>
    <scope>VARIANTS ARG-462 AND HIS-660</scope>
    <source>
        <tissue>Cervix</tissue>
        <tissue>Rectum tumor</tissue>
        <tissue>Testis</tissue>
    </source>
</reference>
<reference key="3">
    <citation type="journal article" date="2005" name="Nature">
        <title>Generation and annotation of the DNA sequences of human chromosomes 2 and 4.</title>
        <authorList>
            <person name="Hillier L.W."/>
            <person name="Graves T.A."/>
            <person name="Fulton R.S."/>
            <person name="Fulton L.A."/>
            <person name="Pepin K.H."/>
            <person name="Minx P."/>
            <person name="Wagner-McPherson C."/>
            <person name="Layman D."/>
            <person name="Wylie K."/>
            <person name="Sekhon M."/>
            <person name="Becker M.C."/>
            <person name="Fewell G.A."/>
            <person name="Delehaunty K.D."/>
            <person name="Miner T.L."/>
            <person name="Nash W.E."/>
            <person name="Kremitzki C."/>
            <person name="Oddy L."/>
            <person name="Du H."/>
            <person name="Sun H."/>
            <person name="Bradshaw-Cordum H."/>
            <person name="Ali J."/>
            <person name="Carter J."/>
            <person name="Cordes M."/>
            <person name="Harris A."/>
            <person name="Isak A."/>
            <person name="van Brunt A."/>
            <person name="Nguyen C."/>
            <person name="Du F."/>
            <person name="Courtney L."/>
            <person name="Kalicki J."/>
            <person name="Ozersky P."/>
            <person name="Abbott S."/>
            <person name="Armstrong J."/>
            <person name="Belter E.A."/>
            <person name="Caruso L."/>
            <person name="Cedroni M."/>
            <person name="Cotton M."/>
            <person name="Davidson T."/>
            <person name="Desai A."/>
            <person name="Elliott G."/>
            <person name="Erb T."/>
            <person name="Fronick C."/>
            <person name="Gaige T."/>
            <person name="Haakenson W."/>
            <person name="Haglund K."/>
            <person name="Holmes A."/>
            <person name="Harkins R."/>
            <person name="Kim K."/>
            <person name="Kruchowski S.S."/>
            <person name="Strong C.M."/>
            <person name="Grewal N."/>
            <person name="Goyea E."/>
            <person name="Hou S."/>
            <person name="Levy A."/>
            <person name="Martinka S."/>
            <person name="Mead K."/>
            <person name="McLellan M.D."/>
            <person name="Meyer R."/>
            <person name="Randall-Maher J."/>
            <person name="Tomlinson C."/>
            <person name="Dauphin-Kohlberg S."/>
            <person name="Kozlowicz-Reilly A."/>
            <person name="Shah N."/>
            <person name="Swearengen-Shahid S."/>
            <person name="Snider J."/>
            <person name="Strong J.T."/>
            <person name="Thompson J."/>
            <person name="Yoakum M."/>
            <person name="Leonard S."/>
            <person name="Pearman C."/>
            <person name="Trani L."/>
            <person name="Radionenko M."/>
            <person name="Waligorski J.E."/>
            <person name="Wang C."/>
            <person name="Rock S.M."/>
            <person name="Tin-Wollam A.-M."/>
            <person name="Maupin R."/>
            <person name="Latreille P."/>
            <person name="Wendl M.C."/>
            <person name="Yang S.-P."/>
            <person name="Pohl C."/>
            <person name="Wallis J.W."/>
            <person name="Spieth J."/>
            <person name="Bieri T.A."/>
            <person name="Berkowicz N."/>
            <person name="Nelson J.O."/>
            <person name="Osborne J."/>
            <person name="Ding L."/>
            <person name="Meyer R."/>
            <person name="Sabo A."/>
            <person name="Shotland Y."/>
            <person name="Sinha P."/>
            <person name="Wohldmann P.E."/>
            <person name="Cook L.L."/>
            <person name="Hickenbotham M.T."/>
            <person name="Eldred J."/>
            <person name="Williams D."/>
            <person name="Jones T.A."/>
            <person name="She X."/>
            <person name="Ciccarelli F.D."/>
            <person name="Izaurralde E."/>
            <person name="Taylor J."/>
            <person name="Schmutz J."/>
            <person name="Myers R.M."/>
            <person name="Cox D.R."/>
            <person name="Huang X."/>
            <person name="McPherson J.D."/>
            <person name="Mardis E.R."/>
            <person name="Clifton S.W."/>
            <person name="Warren W.C."/>
            <person name="Chinwalla A.T."/>
            <person name="Eddy S.R."/>
            <person name="Marra M.A."/>
            <person name="Ovcharenko I."/>
            <person name="Furey T.S."/>
            <person name="Miller W."/>
            <person name="Eichler E.E."/>
            <person name="Bork P."/>
            <person name="Suyama M."/>
            <person name="Torrents D."/>
            <person name="Waterston R.H."/>
            <person name="Wilson R.K."/>
        </authorList>
    </citation>
    <scope>NUCLEOTIDE SEQUENCE [LARGE SCALE GENOMIC DNA]</scope>
</reference>
<reference key="4">
    <citation type="journal article" date="2004" name="Genome Res.">
        <title>The status, quality, and expansion of the NIH full-length cDNA project: the Mammalian Gene Collection (MGC).</title>
        <authorList>
            <consortium name="The MGC Project Team"/>
        </authorList>
    </citation>
    <scope>NUCLEOTIDE SEQUENCE [LARGE SCALE MRNA] (ISOFORMS 3; 6 AND 7)</scope>
    <scope>NUCLEOTIDE SEQUENCE [LARGE SCALE MRNA] OF 633-914 (ISOFORM 9)</scope>
    <scope>VARIANT HIS-660</scope>
    <source>
        <tissue>Blood</tissue>
        <tissue>Brain</tissue>
    </source>
</reference>
<reference key="5">
    <citation type="journal article" date="2008" name="Proc. Natl. Acad. Sci. U.S.A.">
        <title>A quantitative atlas of mitotic phosphorylation.</title>
        <authorList>
            <person name="Dephoure N."/>
            <person name="Zhou C."/>
            <person name="Villen J."/>
            <person name="Beausoleil S.A."/>
            <person name="Bakalarski C.E."/>
            <person name="Elledge S.J."/>
            <person name="Gygi S.P."/>
        </authorList>
    </citation>
    <scope>PHOSPHORYLATION [LARGE SCALE ANALYSIS] AT SER-60</scope>
    <scope>IDENTIFICATION BY MASS SPECTROMETRY [LARGE SCALE ANALYSIS]</scope>
    <source>
        <tissue>Cervix carcinoma</tissue>
    </source>
</reference>
<reference key="6">
    <citation type="journal article" date="2009" name="Anal. Chem.">
        <title>Lys-N and trypsin cover complementary parts of the phosphoproteome in a refined SCX-based approach.</title>
        <authorList>
            <person name="Gauci S."/>
            <person name="Helbig A.O."/>
            <person name="Slijper M."/>
            <person name="Krijgsveld J."/>
            <person name="Heck A.J."/>
            <person name="Mohammed S."/>
        </authorList>
    </citation>
    <scope>IDENTIFICATION BY MASS SPECTROMETRY [LARGE SCALE ANALYSIS]</scope>
</reference>
<reference key="7">
    <citation type="journal article" date="2009" name="Mol. Cell. Proteomics">
        <title>Large-scale proteomics analysis of the human kinome.</title>
        <authorList>
            <person name="Oppermann F.S."/>
            <person name="Gnad F."/>
            <person name="Olsen J.V."/>
            <person name="Hornberger R."/>
            <person name="Greff Z."/>
            <person name="Keri G."/>
            <person name="Mann M."/>
            <person name="Daub H."/>
        </authorList>
    </citation>
    <scope>IDENTIFICATION BY MASS SPECTROMETRY [LARGE SCALE ANALYSIS]</scope>
</reference>
<reference key="8">
    <citation type="journal article" date="2009" name="Sci. Signal.">
        <title>Quantitative phosphoproteomic analysis of T cell receptor signaling reveals system-wide modulation of protein-protein interactions.</title>
        <authorList>
            <person name="Mayya V."/>
            <person name="Lundgren D.H."/>
            <person name="Hwang S.-I."/>
            <person name="Rezaul K."/>
            <person name="Wu L."/>
            <person name="Eng J.K."/>
            <person name="Rodionov V."/>
            <person name="Han D.K."/>
        </authorList>
    </citation>
    <scope>PHOSPHORYLATION [LARGE SCALE ANALYSIS] AT SER-60 AND SER-432</scope>
    <scope>IDENTIFICATION BY MASS SPECTROMETRY [LARGE SCALE ANALYSIS]</scope>
    <source>
        <tissue>Leukemic T-cell</tissue>
    </source>
</reference>
<reference key="9">
    <citation type="journal article" date="2011" name="Sci. Signal.">
        <title>System-wide temporal characterization of the proteome and phosphoproteome of human embryonic stem cell differentiation.</title>
        <authorList>
            <person name="Rigbolt K.T."/>
            <person name="Prokhorova T.A."/>
            <person name="Akimov V."/>
            <person name="Henningsen J."/>
            <person name="Johansen P.T."/>
            <person name="Kratchmarova I."/>
            <person name="Kassem M."/>
            <person name="Mann M."/>
            <person name="Olsen J.V."/>
            <person name="Blagoev B."/>
        </authorList>
    </citation>
    <scope>PHOSPHORYLATION [LARGE SCALE ANALYSIS] AT SER-60</scope>
    <scope>IDENTIFICATION BY MASS SPECTROMETRY [LARGE SCALE ANALYSIS]</scope>
</reference>
<reference key="10">
    <citation type="journal article" date="2013" name="J. Proteome Res.">
        <title>Toward a comprehensive characterization of a human cancer cell phosphoproteome.</title>
        <authorList>
            <person name="Zhou H."/>
            <person name="Di Palma S."/>
            <person name="Preisinger C."/>
            <person name="Peng M."/>
            <person name="Polat A.N."/>
            <person name="Heck A.J."/>
            <person name="Mohammed S."/>
        </authorList>
    </citation>
    <scope>PHOSPHORYLATION [LARGE SCALE ANALYSIS] AT SER-60; SER-340; SER-343 AND THR-454</scope>
    <scope>IDENTIFICATION BY MASS SPECTROMETRY [LARGE SCALE ANALYSIS]</scope>
    <source>
        <tissue>Cervix carcinoma</tissue>
        <tissue>Erythroleukemia</tissue>
    </source>
</reference>
<reference key="11">
    <citation type="journal article" date="2014" name="J. Proteomics">
        <title>An enzyme assisted RP-RPLC approach for in-depth analysis of human liver phosphoproteome.</title>
        <authorList>
            <person name="Bian Y."/>
            <person name="Song C."/>
            <person name="Cheng K."/>
            <person name="Dong M."/>
            <person name="Wang F."/>
            <person name="Huang J."/>
            <person name="Sun D."/>
            <person name="Wang L."/>
            <person name="Ye M."/>
            <person name="Zou H."/>
        </authorList>
    </citation>
    <scope>PHOSPHORYLATION [LARGE SCALE ANALYSIS] AT SER-327; THR-329; SER-335; SER-340; SER-343; THR-427; SER-436 AND THR-454</scope>
    <scope>IDENTIFICATION BY MASS SPECTROMETRY [LARGE SCALE ANALYSIS]</scope>
    <source>
        <tissue>Liver</tissue>
    </source>
</reference>
<protein>
    <recommendedName>
        <fullName>La-related protein 1B</fullName>
    </recommendedName>
    <alternativeName>
        <fullName>La ribonucleoprotein domain family member 1B</fullName>
    </alternativeName>
    <alternativeName>
        <fullName>La ribonucleoprotein domain family member 2</fullName>
    </alternativeName>
    <alternativeName>
        <fullName>La-related protein 2</fullName>
    </alternativeName>
</protein>
<name>LAR1B_HUMAN</name>
<sequence>MENWPTPSELVNTGFQSVLSQGNKKPQNRKEKEEKVEKRSNSDSKENRETKLNGPGENVSEDEAQSSNQRKRANKHKWVPLHLDVVRSESQERPGSRNSSRCQPEANKPTHNNRRNDTRSWKRDREKRDDQDDVSSVRSEGGNIRGSFRGRGRGRGRGRGRGRGNPRLNFDYSYGYQEHGERTDQPFQTELNTSMMYYYDDGTGVQVYPVEEALLKEYIKRQIEYYFSVENLERDFFLRGKMDEQGFLPISLIAGFQRVQALTTNLNLILEALKDSTEVEIVDEKMRKKIEPEKWPIPGPPPRSVPPTDFSQLIDCPEFVPGQAFCSHTESAPNSPRIGSPLSPKKNSETSILQAMSRGLSTSLPDLDSEPWIEVKKRHQPAPVKLRESVSVPEGSLNQLCSSEEPEQEELDFLFDEEIEQIGRKNTFTDWSDNDSDYEIDDQDLNKILIVTQTPPYVKKHPGGDRTGTHMSRAKITSELAKVINDGLYYYEQDLWMEEDENKHTAIKQEVENFKKLNLISKEQFENLTPELPFEPNQEVPVAPSQSRQGGVQGVLHIPKKDLTDELAQKLFDVSEITSAAMVHSLPTAVPESPRIHPTRTPKTPRTPRLQDPNKTPRFYPVVKEPKAIDVKSPRKRKTRHSTNPPLECHVGWVMDSRDRGPGTSSVSTSNASPSEGAPLAGSYGCTPHSFPKFQHPSHELLKENGFTQQVYHKYRRRCLSERKRLGIGQSQEMNTLFRFWSFFLRDHFNKKMYEEFRQLAWEDAKENYRYGLECLFRFYSYGLEKKFRREIFQDFQEETKKDYESGQLYGLEKFWAYLKYSQSKTQSIDPKLQEYLCSFKRLEDFRVDPPISDEFGRKRHSSTSGEESNRHRLPPNSSTKPPNAAKPTSTSELQVPINSPRRNISPESSDNSH</sequence>
<organism>
    <name type="scientific">Homo sapiens</name>
    <name type="common">Human</name>
    <dbReference type="NCBI Taxonomy" id="9606"/>
    <lineage>
        <taxon>Eukaryota</taxon>
        <taxon>Metazoa</taxon>
        <taxon>Chordata</taxon>
        <taxon>Craniata</taxon>
        <taxon>Vertebrata</taxon>
        <taxon>Euteleostomi</taxon>
        <taxon>Mammalia</taxon>
        <taxon>Eutheria</taxon>
        <taxon>Euarchontoglires</taxon>
        <taxon>Primates</taxon>
        <taxon>Haplorrhini</taxon>
        <taxon>Catarrhini</taxon>
        <taxon>Hominidae</taxon>
        <taxon>Homo</taxon>
    </lineage>
</organism>
<proteinExistence type="evidence at protein level"/>
<comment type="interaction">
    <interactant intactId="EBI-3940258">
        <id>Q659C4</id>
    </interactant>
    <interactant intactId="EBI-2692369">
        <id>O00139</id>
        <label>KIF2A</label>
    </interactant>
    <organismsDiffer>false</organismsDiffer>
    <experiments>3</experiments>
</comment>
<comment type="interaction">
    <interactant intactId="EBI-3940258">
        <id>Q659C4</id>
    </interactant>
    <interactant intactId="EBI-749955">
        <id>Q86WT6</id>
        <label>TRIM69</label>
    </interactant>
    <organismsDiffer>false</organismsDiffer>
    <experiments>3</experiments>
</comment>
<comment type="interaction">
    <interactant intactId="EBI-12036449">
        <id>Q659C4-6</id>
    </interactant>
    <interactant intactId="EBI-16439278">
        <id>Q6FHY5</id>
        <label>MEOX2</label>
    </interactant>
    <organismsDiffer>false</organismsDiffer>
    <experiments>3</experiments>
</comment>
<comment type="interaction">
    <interactant intactId="EBI-12036449">
        <id>Q659C4-6</id>
    </interactant>
    <interactant intactId="EBI-723426">
        <id>Q13084</id>
        <label>MRPL28</label>
    </interactant>
    <organismsDiffer>false</organismsDiffer>
    <experiments>3</experiments>
</comment>
<comment type="interaction">
    <interactant intactId="EBI-12036449">
        <id>Q659C4-6</id>
    </interactant>
    <interactant intactId="EBI-14066006">
        <id>Q4G0R1</id>
        <label>PIBF1</label>
    </interactant>
    <organismsDiffer>false</organismsDiffer>
    <experiments>3</experiments>
</comment>
<comment type="interaction">
    <interactant intactId="EBI-12036449">
        <id>Q659C4-6</id>
    </interactant>
    <interactant intactId="EBI-713992">
        <id>P47224</id>
        <label>RABIF</label>
    </interactant>
    <organismsDiffer>false</organismsDiffer>
    <experiments>3</experiments>
</comment>
<comment type="interaction">
    <interactant intactId="EBI-12036449">
        <id>Q659C4-6</id>
    </interactant>
    <interactant intactId="EBI-11322432">
        <id>Q8NC74</id>
        <label>RBBP8NL</label>
    </interactant>
    <organismsDiffer>false</organismsDiffer>
    <experiments>3</experiments>
</comment>
<comment type="interaction">
    <interactant intactId="EBI-12036449">
        <id>Q659C4-6</id>
    </interactant>
    <interactant intactId="EBI-11899977">
        <id>Q3MII6</id>
        <label>TBC1D25</label>
    </interactant>
    <organismsDiffer>false</organismsDiffer>
    <experiments>3</experiments>
</comment>
<comment type="alternative products">
    <event type="alternative splicing"/>
    <isoform>
        <id>Q659C4-1</id>
        <name>1</name>
        <sequence type="displayed"/>
    </isoform>
    <isoform>
        <id>Q659C4-2</id>
        <name>2</name>
        <sequence type="described" ref="VSP_027642 VSP_027647"/>
    </isoform>
    <isoform>
        <id>Q659C4-3</id>
        <name>3</name>
        <sequence type="described" ref="VSP_027643 VSP_027644"/>
    </isoform>
    <isoform>
        <id>Q659C4-4</id>
        <name>4</name>
        <sequence type="described" ref="VSP_027641 VSP_027645 VSP_027646"/>
    </isoform>
    <isoform>
        <id>Q659C4-5</id>
        <name>5</name>
        <sequence type="described" ref="VSP_027640 VSP_027651"/>
    </isoform>
    <isoform>
        <id>Q659C4-6</id>
        <name>6</name>
        <sequence type="described" ref="VSP_027639 VSP_027653"/>
    </isoform>
    <isoform>
        <id>Q659C4-7</id>
        <name>7</name>
        <sequence type="described" ref="VSP_027639 VSP_027652"/>
    </isoform>
    <isoform>
        <id>Q659C4-8</id>
        <name>8</name>
        <sequence type="described" ref="VSP_027638 VSP_027650"/>
    </isoform>
    <isoform>
        <id>Q659C4-9</id>
        <name>9</name>
        <sequence type="described" ref="VSP_027648 VSP_027649"/>
    </isoform>
</comment>
<comment type="similarity">
    <text evidence="9">Belongs to the LARP family.</text>
</comment>
<comment type="sequence caution" evidence="9">
    <conflict type="erroneous initiation">
        <sequence resource="EMBL-CDS" id="AAH50654"/>
    </conflict>
    <text>Truncated N-terminus.</text>
</comment>
<comment type="sequence caution" evidence="9">
    <conflict type="frameshift">
        <sequence resource="EMBL-CDS" id="AAH50654"/>
    </conflict>
</comment>
<comment type="sequence caution" evidence="9">
    <conflict type="frameshift">
        <sequence resource="EMBL-CDS" id="BAB15679"/>
    </conflict>
</comment>
<comment type="sequence caution" evidence="9">
    <conflict type="frameshift">
        <sequence resource="EMBL-CDS" id="CAH56379"/>
    </conflict>
</comment>
<keyword id="KW-0025">Alternative splicing</keyword>
<keyword id="KW-0597">Phosphoprotein</keyword>
<keyword id="KW-1267">Proteomics identification</keyword>
<keyword id="KW-1185">Reference proteome</keyword>
<keyword id="KW-0694">RNA-binding</keyword>
<evidence type="ECO:0000255" key="1">
    <source>
        <dbReference type="PROSITE-ProRule" id="PRU00332"/>
    </source>
</evidence>
<evidence type="ECO:0000256" key="2">
    <source>
        <dbReference type="SAM" id="MobiDB-lite"/>
    </source>
</evidence>
<evidence type="ECO:0000269" key="3">
    <source>
    </source>
</evidence>
<evidence type="ECO:0000269" key="4">
    <source>
    </source>
</evidence>
<evidence type="ECO:0000269" key="5">
    <source>
    </source>
</evidence>
<evidence type="ECO:0000303" key="6">
    <source>
    </source>
</evidence>
<evidence type="ECO:0000303" key="7">
    <source>
    </source>
</evidence>
<evidence type="ECO:0000303" key="8">
    <source>
    </source>
</evidence>
<evidence type="ECO:0000305" key="9"/>
<evidence type="ECO:0007744" key="10">
    <source>
    </source>
</evidence>
<evidence type="ECO:0007744" key="11">
    <source>
    </source>
</evidence>
<evidence type="ECO:0007744" key="12">
    <source>
    </source>
</evidence>
<evidence type="ECO:0007744" key="13">
    <source>
    </source>
</evidence>
<evidence type="ECO:0007744" key="14">
    <source>
    </source>
</evidence>
<dbReference type="EMBL" id="AK001240">
    <property type="protein sequence ID" value="BAA91576.1"/>
    <property type="molecule type" value="mRNA"/>
</dbReference>
<dbReference type="EMBL" id="AK027164">
    <property type="protein sequence ID" value="BAB15679.1"/>
    <property type="status" value="ALT_FRAME"/>
    <property type="molecule type" value="mRNA"/>
</dbReference>
<dbReference type="EMBL" id="AK092764">
    <property type="protein sequence ID" value="BAC03970.1"/>
    <property type="molecule type" value="mRNA"/>
</dbReference>
<dbReference type="EMBL" id="AK098437">
    <property type="protein sequence ID" value="BAC05306.1"/>
    <property type="molecule type" value="mRNA"/>
</dbReference>
<dbReference type="EMBL" id="AL137759">
    <property type="protein sequence ID" value="CAH56379.1"/>
    <property type="status" value="ALT_FRAME"/>
    <property type="molecule type" value="mRNA"/>
</dbReference>
<dbReference type="EMBL" id="AL832170">
    <property type="protein sequence ID" value="CAH56210.1"/>
    <property type="molecule type" value="mRNA"/>
</dbReference>
<dbReference type="EMBL" id="BX537937">
    <property type="protein sequence ID" value="CAD97908.1"/>
    <property type="molecule type" value="mRNA"/>
</dbReference>
<dbReference type="EMBL" id="AC096898">
    <property type="status" value="NOT_ANNOTATED_CDS"/>
    <property type="molecule type" value="Genomic_DNA"/>
</dbReference>
<dbReference type="EMBL" id="AC099340">
    <property type="status" value="NOT_ANNOTATED_CDS"/>
    <property type="molecule type" value="Genomic_DNA"/>
</dbReference>
<dbReference type="EMBL" id="AC108045">
    <property type="status" value="NOT_ANNOTATED_CDS"/>
    <property type="molecule type" value="Genomic_DNA"/>
</dbReference>
<dbReference type="EMBL" id="AC114735">
    <property type="protein sequence ID" value="AAY41042.1"/>
    <property type="molecule type" value="Genomic_DNA"/>
</dbReference>
<dbReference type="EMBL" id="AC124030">
    <property type="protein sequence ID" value="AAY41031.1"/>
    <property type="molecule type" value="Genomic_DNA"/>
</dbReference>
<dbReference type="EMBL" id="BC030516">
    <property type="protein sequence ID" value="AAH30516.1"/>
    <property type="molecule type" value="mRNA"/>
</dbReference>
<dbReference type="EMBL" id="BC050654">
    <property type="protein sequence ID" value="AAH50654.1"/>
    <property type="status" value="ALT_SEQ"/>
    <property type="molecule type" value="mRNA"/>
</dbReference>
<dbReference type="EMBL" id="BC062606">
    <property type="protein sequence ID" value="AAH62606.1"/>
    <property type="molecule type" value="mRNA"/>
</dbReference>
<dbReference type="EMBL" id="BC110300">
    <property type="protein sequence ID" value="AAI10301.1"/>
    <property type="molecule type" value="mRNA"/>
</dbReference>
<dbReference type="CCDS" id="CCDS3738.1">
    <molecule id="Q659C4-1"/>
</dbReference>
<dbReference type="CCDS" id="CCDS64057.1">
    <molecule id="Q659C4-3"/>
</dbReference>
<dbReference type="RefSeq" id="NP_001265533.1">
    <molecule id="Q659C4-3"/>
    <property type="nucleotide sequence ID" value="NM_001278604.2"/>
</dbReference>
<dbReference type="RefSeq" id="NP_060548.2">
    <molecule id="Q659C4-1"/>
    <property type="nucleotide sequence ID" value="NM_018078.3"/>
</dbReference>
<dbReference type="RefSeq" id="NP_115615.2">
    <property type="nucleotide sequence ID" value="NM_032239.3"/>
</dbReference>
<dbReference type="RefSeq" id="NP_835144.1">
    <property type="nucleotide sequence ID" value="NM_178043.2"/>
</dbReference>
<dbReference type="RefSeq" id="XP_011530371.1">
    <molecule id="Q659C4-2"/>
    <property type="nucleotide sequence ID" value="XM_011532069.2"/>
</dbReference>
<dbReference type="RefSeq" id="XP_016863842.1">
    <property type="nucleotide sequence ID" value="XM_017008353.1"/>
</dbReference>
<dbReference type="RefSeq" id="XP_047271828.1">
    <molecule id="Q659C4-1"/>
    <property type="nucleotide sequence ID" value="XM_047415872.1"/>
</dbReference>
<dbReference type="RefSeq" id="XP_047271843.1">
    <molecule id="Q659C4-3"/>
    <property type="nucleotide sequence ID" value="XM_047415887.1"/>
</dbReference>
<dbReference type="RefSeq" id="XP_054206316.1">
    <molecule id="Q659C4-1"/>
    <property type="nucleotide sequence ID" value="XM_054350341.1"/>
</dbReference>
<dbReference type="RefSeq" id="XP_054206322.1">
    <molecule id="Q659C4-2"/>
    <property type="nucleotide sequence ID" value="XM_054350347.1"/>
</dbReference>
<dbReference type="RefSeq" id="XP_054206342.1">
    <molecule id="Q659C4-3"/>
    <property type="nucleotide sequence ID" value="XM_054350367.1"/>
</dbReference>
<dbReference type="SMR" id="Q659C4"/>
<dbReference type="BioGRID" id="120438">
    <property type="interactions" value="170"/>
</dbReference>
<dbReference type="DIP" id="DIP-47319N"/>
<dbReference type="FunCoup" id="Q659C4">
    <property type="interactions" value="2089"/>
</dbReference>
<dbReference type="IntAct" id="Q659C4">
    <property type="interactions" value="117"/>
</dbReference>
<dbReference type="MINT" id="Q659C4"/>
<dbReference type="STRING" id="9606.ENSP00000321997"/>
<dbReference type="GlyGen" id="Q659C4">
    <property type="glycosylation" value="3 sites, 1 N-linked glycan (1 site), 1 O-linked glycan (1 site)"/>
</dbReference>
<dbReference type="iPTMnet" id="Q659C4"/>
<dbReference type="PhosphoSitePlus" id="Q659C4"/>
<dbReference type="BioMuta" id="LARP1B"/>
<dbReference type="DMDM" id="158564329"/>
<dbReference type="CPTAC" id="CPTAC-1030"/>
<dbReference type="jPOST" id="Q659C4"/>
<dbReference type="MassIVE" id="Q659C4"/>
<dbReference type="PaxDb" id="9606-ENSP00000321997"/>
<dbReference type="PeptideAtlas" id="Q659C4"/>
<dbReference type="ProteomicsDB" id="65934">
    <molecule id="Q659C4-1"/>
</dbReference>
<dbReference type="ProteomicsDB" id="65935">
    <molecule id="Q659C4-2"/>
</dbReference>
<dbReference type="ProteomicsDB" id="65936">
    <molecule id="Q659C4-3"/>
</dbReference>
<dbReference type="ProteomicsDB" id="65937">
    <molecule id="Q659C4-4"/>
</dbReference>
<dbReference type="ProteomicsDB" id="65938">
    <molecule id="Q659C4-5"/>
</dbReference>
<dbReference type="ProteomicsDB" id="65939">
    <molecule id="Q659C4-6"/>
</dbReference>
<dbReference type="ProteomicsDB" id="65940">
    <molecule id="Q659C4-7"/>
</dbReference>
<dbReference type="ProteomicsDB" id="65941">
    <molecule id="Q659C4-8"/>
</dbReference>
<dbReference type="ProteomicsDB" id="65942">
    <molecule id="Q659C4-9"/>
</dbReference>
<dbReference type="Pumba" id="Q659C4"/>
<dbReference type="Antibodypedia" id="26972">
    <property type="antibodies" value="158 antibodies from 27 providers"/>
</dbReference>
<dbReference type="DNASU" id="55132"/>
<dbReference type="Ensembl" id="ENST00000326639.11">
    <molecule id="Q659C4-1"/>
    <property type="protein sequence ID" value="ENSP00000321997.6"/>
    <property type="gene ID" value="ENSG00000138709.20"/>
</dbReference>
<dbReference type="Ensembl" id="ENST00000394288.7">
    <molecule id="Q659C4-3"/>
    <property type="protein sequence ID" value="ENSP00000377829.3"/>
    <property type="gene ID" value="ENSG00000138709.20"/>
</dbReference>
<dbReference type="Ensembl" id="ENST00000648358.2">
    <molecule id="Q659C4-3"/>
    <property type="protein sequence ID" value="ENSP00000497514.2"/>
    <property type="gene ID" value="ENSG00000138709.20"/>
</dbReference>
<dbReference type="Ensembl" id="ENST00000649983.2">
    <molecule id="Q659C4-1"/>
    <property type="protein sequence ID" value="ENSP00000497192.2"/>
    <property type="gene ID" value="ENSG00000138709.20"/>
</dbReference>
<dbReference type="GeneID" id="55132"/>
<dbReference type="KEGG" id="hsa:55132"/>
<dbReference type="MANE-Select" id="ENST00000326639.11">
    <property type="protein sequence ID" value="ENSP00000321997.6"/>
    <property type="RefSeq nucleotide sequence ID" value="NM_018078.4"/>
    <property type="RefSeq protein sequence ID" value="NP_060548.2"/>
</dbReference>
<dbReference type="UCSC" id="uc003ify.5">
    <molecule id="Q659C4-1"/>
    <property type="organism name" value="human"/>
</dbReference>
<dbReference type="AGR" id="HGNC:24704"/>
<dbReference type="CTD" id="55132"/>
<dbReference type="DisGeNET" id="55132"/>
<dbReference type="GeneCards" id="LARP1B"/>
<dbReference type="HGNC" id="HGNC:24704">
    <property type="gene designation" value="LARP1B"/>
</dbReference>
<dbReference type="HPA" id="ENSG00000138709">
    <property type="expression patterns" value="Low tissue specificity"/>
</dbReference>
<dbReference type="MalaCards" id="LARP1B"/>
<dbReference type="MIM" id="620467">
    <property type="type" value="gene"/>
</dbReference>
<dbReference type="neXtProt" id="NX_Q659C4"/>
<dbReference type="OpenTargets" id="ENSG00000138709"/>
<dbReference type="PharmGKB" id="PA165664174"/>
<dbReference type="VEuPathDB" id="HostDB:ENSG00000138709"/>
<dbReference type="eggNOG" id="KOG2590">
    <property type="taxonomic scope" value="Eukaryota"/>
</dbReference>
<dbReference type="GeneTree" id="ENSGT00940000154718"/>
<dbReference type="HOGENOM" id="CLU_003957_1_0_1"/>
<dbReference type="InParanoid" id="Q659C4"/>
<dbReference type="OMA" id="FRQEIFQ"/>
<dbReference type="OrthoDB" id="340227at2759"/>
<dbReference type="PAN-GO" id="Q659C4">
    <property type="GO annotations" value="4 GO annotations based on evolutionary models"/>
</dbReference>
<dbReference type="PhylomeDB" id="Q659C4"/>
<dbReference type="TreeFam" id="TF314516"/>
<dbReference type="PathwayCommons" id="Q659C4"/>
<dbReference type="SignaLink" id="Q659C4"/>
<dbReference type="BioGRID-ORCS" id="55132">
    <property type="hits" value="35 hits in 1149 CRISPR screens"/>
</dbReference>
<dbReference type="CD-CODE" id="232F8A39">
    <property type="entry name" value="P-body"/>
</dbReference>
<dbReference type="CD-CODE" id="DEE660B4">
    <property type="entry name" value="Stress granule"/>
</dbReference>
<dbReference type="ChiTaRS" id="LARP1B">
    <property type="organism name" value="human"/>
</dbReference>
<dbReference type="GenomeRNAi" id="55132"/>
<dbReference type="Pharos" id="Q659C4">
    <property type="development level" value="Tbio"/>
</dbReference>
<dbReference type="PRO" id="PR:Q659C4"/>
<dbReference type="Proteomes" id="UP000005640">
    <property type="component" value="Chromosome 4"/>
</dbReference>
<dbReference type="RNAct" id="Q659C4">
    <property type="molecule type" value="protein"/>
</dbReference>
<dbReference type="Bgee" id="ENSG00000138709">
    <property type="expression patterns" value="Expressed in secondary oocyte and 177 other cell types or tissues"/>
</dbReference>
<dbReference type="ExpressionAtlas" id="Q659C4">
    <property type="expression patterns" value="baseline and differential"/>
</dbReference>
<dbReference type="GO" id="GO:0010494">
    <property type="term" value="C:cytoplasmic stress granule"/>
    <property type="evidence" value="ECO:0000318"/>
    <property type="project" value="GO_Central"/>
</dbReference>
<dbReference type="GO" id="GO:0005829">
    <property type="term" value="C:cytosol"/>
    <property type="evidence" value="ECO:0000318"/>
    <property type="project" value="GO_Central"/>
</dbReference>
<dbReference type="GO" id="GO:0005634">
    <property type="term" value="C:nucleus"/>
    <property type="evidence" value="ECO:0007005"/>
    <property type="project" value="UniProtKB"/>
</dbReference>
<dbReference type="GO" id="GO:0003723">
    <property type="term" value="F:RNA binding"/>
    <property type="evidence" value="ECO:0007005"/>
    <property type="project" value="UniProtKB"/>
</dbReference>
<dbReference type="GO" id="GO:0000339">
    <property type="term" value="F:RNA cap binding"/>
    <property type="evidence" value="ECO:0007669"/>
    <property type="project" value="InterPro"/>
</dbReference>
<dbReference type="GO" id="GO:0048255">
    <property type="term" value="P:mRNA stabilization"/>
    <property type="evidence" value="ECO:0007669"/>
    <property type="project" value="InterPro"/>
</dbReference>
<dbReference type="GO" id="GO:0045727">
    <property type="term" value="P:positive regulation of translation"/>
    <property type="evidence" value="ECO:0000318"/>
    <property type="project" value="GO_Central"/>
</dbReference>
<dbReference type="CDD" id="cd08038">
    <property type="entry name" value="LARP_2"/>
    <property type="match status" value="1"/>
</dbReference>
<dbReference type="FunFam" id="1.10.10.10:FF:000131">
    <property type="entry name" value="la-related protein 1B isoform X2"/>
    <property type="match status" value="1"/>
</dbReference>
<dbReference type="Gene3D" id="1.10.10.10">
    <property type="entry name" value="Winged helix-like DNA-binding domain superfamily/Winged helix DNA-binding domain"/>
    <property type="match status" value="1"/>
</dbReference>
<dbReference type="InterPro" id="IPR006607">
    <property type="entry name" value="DM15"/>
</dbReference>
<dbReference type="InterPro" id="IPR045180">
    <property type="entry name" value="La_dom_prot"/>
</dbReference>
<dbReference type="InterPro" id="IPR006630">
    <property type="entry name" value="La_HTH"/>
</dbReference>
<dbReference type="InterPro" id="IPR036388">
    <property type="entry name" value="WH-like_DNA-bd_sf"/>
</dbReference>
<dbReference type="InterPro" id="IPR036390">
    <property type="entry name" value="WH_DNA-bd_sf"/>
</dbReference>
<dbReference type="PANTHER" id="PTHR22792:SF50">
    <property type="entry name" value="LA-RELATED PROTEIN 1B"/>
    <property type="match status" value="1"/>
</dbReference>
<dbReference type="PANTHER" id="PTHR22792">
    <property type="entry name" value="LUPUS LA PROTEIN-RELATED"/>
    <property type="match status" value="1"/>
</dbReference>
<dbReference type="Pfam" id="PF05383">
    <property type="entry name" value="La"/>
    <property type="match status" value="1"/>
</dbReference>
<dbReference type="Pfam" id="PF21071">
    <property type="entry name" value="LARP1_HEAT"/>
    <property type="match status" value="1"/>
</dbReference>
<dbReference type="SMART" id="SM00684">
    <property type="entry name" value="DM15"/>
    <property type="match status" value="3"/>
</dbReference>
<dbReference type="SMART" id="SM00715">
    <property type="entry name" value="LA"/>
    <property type="match status" value="1"/>
</dbReference>
<dbReference type="SUPFAM" id="SSF46785">
    <property type="entry name" value="Winged helix' DNA-binding domain"/>
    <property type="match status" value="1"/>
</dbReference>
<dbReference type="PROSITE" id="PS50961">
    <property type="entry name" value="HTH_LA"/>
    <property type="match status" value="1"/>
</dbReference>
<gene>
    <name type="primary">LARP1B</name>
    <name type="synonym">LARP2</name>
</gene>